<comment type="catalytic activity">
    <reaction evidence="1">
        <text>L-citrulline + L-aspartate + ATP = 2-(N(omega)-L-arginino)succinate + AMP + diphosphate + H(+)</text>
        <dbReference type="Rhea" id="RHEA:10932"/>
        <dbReference type="ChEBI" id="CHEBI:15378"/>
        <dbReference type="ChEBI" id="CHEBI:29991"/>
        <dbReference type="ChEBI" id="CHEBI:30616"/>
        <dbReference type="ChEBI" id="CHEBI:33019"/>
        <dbReference type="ChEBI" id="CHEBI:57472"/>
        <dbReference type="ChEBI" id="CHEBI:57743"/>
        <dbReference type="ChEBI" id="CHEBI:456215"/>
        <dbReference type="EC" id="6.3.4.5"/>
    </reaction>
</comment>
<comment type="pathway">
    <text evidence="1">Amino-acid biosynthesis; L-arginine biosynthesis; L-arginine from L-ornithine and carbamoyl phosphate: step 2/3.</text>
</comment>
<comment type="subunit">
    <text evidence="1">Homotetramer.</text>
</comment>
<comment type="subcellular location">
    <subcellularLocation>
        <location evidence="1">Cytoplasm</location>
    </subcellularLocation>
</comment>
<comment type="similarity">
    <text evidence="1">Belongs to the argininosuccinate synthase family. Type 1 subfamily.</text>
</comment>
<protein>
    <recommendedName>
        <fullName evidence="1">Argininosuccinate synthase</fullName>
        <ecNumber evidence="1">6.3.4.5</ecNumber>
    </recommendedName>
    <alternativeName>
        <fullName evidence="1">Citrulline--aspartate ligase</fullName>
    </alternativeName>
</protein>
<dbReference type="EC" id="6.3.4.5" evidence="1"/>
<dbReference type="EMBL" id="AE016879">
    <property type="protein sequence ID" value="AAP28567.1"/>
    <property type="molecule type" value="Genomic_DNA"/>
</dbReference>
<dbReference type="EMBL" id="AE017334">
    <property type="protein sequence ID" value="AAT33997.1"/>
    <property type="molecule type" value="Genomic_DNA"/>
</dbReference>
<dbReference type="EMBL" id="AE017225">
    <property type="protein sequence ID" value="AAT56825.1"/>
    <property type="molecule type" value="Genomic_DNA"/>
</dbReference>
<dbReference type="RefSeq" id="NP_847081.1">
    <property type="nucleotide sequence ID" value="NC_003997.3"/>
</dbReference>
<dbReference type="RefSeq" id="WP_000412328.1">
    <property type="nucleotide sequence ID" value="NZ_WXXJ01000026.1"/>
</dbReference>
<dbReference type="RefSeq" id="YP_030775.1">
    <property type="nucleotide sequence ID" value="NC_005945.1"/>
</dbReference>
<dbReference type="SMR" id="Q81KV7"/>
<dbReference type="IntAct" id="Q81KV7">
    <property type="interactions" value="9"/>
</dbReference>
<dbReference type="STRING" id="261594.GBAA_4880"/>
<dbReference type="DNASU" id="1084039"/>
<dbReference type="GeneID" id="45024503"/>
<dbReference type="KEGG" id="ban:BA_4880"/>
<dbReference type="KEGG" id="banh:HYU01_23780"/>
<dbReference type="KEGG" id="bar:GBAA_4880"/>
<dbReference type="KEGG" id="bat:BAS4528"/>
<dbReference type="PATRIC" id="fig|198094.11.peg.4840"/>
<dbReference type="eggNOG" id="COG0137">
    <property type="taxonomic scope" value="Bacteria"/>
</dbReference>
<dbReference type="HOGENOM" id="CLU_032784_4_2_9"/>
<dbReference type="OMA" id="WRWTVSP"/>
<dbReference type="OrthoDB" id="9801641at2"/>
<dbReference type="UniPathway" id="UPA00068">
    <property type="reaction ID" value="UER00113"/>
</dbReference>
<dbReference type="Proteomes" id="UP000000427">
    <property type="component" value="Chromosome"/>
</dbReference>
<dbReference type="Proteomes" id="UP000000594">
    <property type="component" value="Chromosome"/>
</dbReference>
<dbReference type="GO" id="GO:0005737">
    <property type="term" value="C:cytoplasm"/>
    <property type="evidence" value="ECO:0007669"/>
    <property type="project" value="UniProtKB-SubCell"/>
</dbReference>
<dbReference type="GO" id="GO:0004055">
    <property type="term" value="F:argininosuccinate synthase activity"/>
    <property type="evidence" value="ECO:0007669"/>
    <property type="project" value="UniProtKB-UniRule"/>
</dbReference>
<dbReference type="GO" id="GO:0005524">
    <property type="term" value="F:ATP binding"/>
    <property type="evidence" value="ECO:0007669"/>
    <property type="project" value="UniProtKB-UniRule"/>
</dbReference>
<dbReference type="GO" id="GO:0000053">
    <property type="term" value="P:argininosuccinate metabolic process"/>
    <property type="evidence" value="ECO:0007669"/>
    <property type="project" value="TreeGrafter"/>
</dbReference>
<dbReference type="GO" id="GO:0006526">
    <property type="term" value="P:L-arginine biosynthetic process"/>
    <property type="evidence" value="ECO:0007669"/>
    <property type="project" value="UniProtKB-UniRule"/>
</dbReference>
<dbReference type="GO" id="GO:0000050">
    <property type="term" value="P:urea cycle"/>
    <property type="evidence" value="ECO:0007669"/>
    <property type="project" value="TreeGrafter"/>
</dbReference>
<dbReference type="CDD" id="cd01999">
    <property type="entry name" value="ASS"/>
    <property type="match status" value="1"/>
</dbReference>
<dbReference type="FunFam" id="1.20.5.470:FF:000002">
    <property type="entry name" value="Argininosuccinate synthase"/>
    <property type="match status" value="1"/>
</dbReference>
<dbReference type="FunFam" id="3.40.50.620:FF:000038">
    <property type="entry name" value="Argininosuccinate synthase"/>
    <property type="match status" value="1"/>
</dbReference>
<dbReference type="FunFam" id="3.90.1260.10:FF:000007">
    <property type="entry name" value="Argininosuccinate synthase"/>
    <property type="match status" value="1"/>
</dbReference>
<dbReference type="Gene3D" id="3.90.1260.10">
    <property type="entry name" value="Argininosuccinate synthetase, chain A, domain 2"/>
    <property type="match status" value="1"/>
</dbReference>
<dbReference type="Gene3D" id="3.40.50.620">
    <property type="entry name" value="HUPs"/>
    <property type="match status" value="1"/>
</dbReference>
<dbReference type="Gene3D" id="1.20.5.470">
    <property type="entry name" value="Single helix bin"/>
    <property type="match status" value="1"/>
</dbReference>
<dbReference type="HAMAP" id="MF_00005">
    <property type="entry name" value="Arg_succ_synth_type1"/>
    <property type="match status" value="1"/>
</dbReference>
<dbReference type="InterPro" id="IPR048268">
    <property type="entry name" value="Arginosuc_syn_C"/>
</dbReference>
<dbReference type="InterPro" id="IPR048267">
    <property type="entry name" value="Arginosuc_syn_N"/>
</dbReference>
<dbReference type="InterPro" id="IPR001518">
    <property type="entry name" value="Arginosuc_synth"/>
</dbReference>
<dbReference type="InterPro" id="IPR018223">
    <property type="entry name" value="Arginosuc_synth_CS"/>
</dbReference>
<dbReference type="InterPro" id="IPR023434">
    <property type="entry name" value="Arginosuc_synth_type_1_subfam"/>
</dbReference>
<dbReference type="InterPro" id="IPR024074">
    <property type="entry name" value="AS_cat/multimer_dom_body"/>
</dbReference>
<dbReference type="InterPro" id="IPR014729">
    <property type="entry name" value="Rossmann-like_a/b/a_fold"/>
</dbReference>
<dbReference type="NCBIfam" id="TIGR00032">
    <property type="entry name" value="argG"/>
    <property type="match status" value="1"/>
</dbReference>
<dbReference type="NCBIfam" id="NF001770">
    <property type="entry name" value="PRK00509.1"/>
    <property type="match status" value="1"/>
</dbReference>
<dbReference type="PANTHER" id="PTHR11587">
    <property type="entry name" value="ARGININOSUCCINATE SYNTHASE"/>
    <property type="match status" value="1"/>
</dbReference>
<dbReference type="PANTHER" id="PTHR11587:SF2">
    <property type="entry name" value="ARGININOSUCCINATE SYNTHASE"/>
    <property type="match status" value="1"/>
</dbReference>
<dbReference type="Pfam" id="PF20979">
    <property type="entry name" value="Arginosuc_syn_C"/>
    <property type="match status" value="1"/>
</dbReference>
<dbReference type="Pfam" id="PF00764">
    <property type="entry name" value="Arginosuc_synth"/>
    <property type="match status" value="1"/>
</dbReference>
<dbReference type="SUPFAM" id="SSF52402">
    <property type="entry name" value="Adenine nucleotide alpha hydrolases-like"/>
    <property type="match status" value="1"/>
</dbReference>
<dbReference type="SUPFAM" id="SSF69864">
    <property type="entry name" value="Argininosuccinate synthetase, C-terminal domain"/>
    <property type="match status" value="1"/>
</dbReference>
<dbReference type="PROSITE" id="PS00564">
    <property type="entry name" value="ARGININOSUCCIN_SYN_1"/>
    <property type="match status" value="1"/>
</dbReference>
<dbReference type="PROSITE" id="PS00565">
    <property type="entry name" value="ARGININOSUCCIN_SYN_2"/>
    <property type="match status" value="1"/>
</dbReference>
<accession>Q81KV7</accession>
<accession>Q6HSB3</accession>
<accession>Q6KLK9</accession>
<proteinExistence type="inferred from homology"/>
<sequence>MEKKKVVLAYSGGLDTSVAIKWLQEKNYDIIALCLDLGEGKDLAFVKEKALSVGAIKSYMIDVQEEFANEYALMAMQAHTLYEGKYPLVSALSRPLIAKKLVEIAEQEGATAVAHGCTGKGNDQVRFEVSIQALNPYLEVIAPVREWKWSREEEIAYAKENNVPIPINLDSPFSIDQNLWGRSNECGILEDPWAAPPEDAYEMTLALEDTPNKPEFVEIGFEAGVPTTLNGTAYPLSELIKTLNALAGKHGVGRIDHVENRLVGIKSREVYECPAAMTLITAHKELEDLTLVKEVAHFKPMIEQKITELIYNGLWFSPLKQALHAFLQETQKNVTGTVRVKLFKGHAIVEGRKSEYSLYDEKLATYTAQDEFNHDAAVGFISLFGLPTKVYSQVNQKKVEA</sequence>
<reference key="1">
    <citation type="journal article" date="2003" name="Nature">
        <title>The genome sequence of Bacillus anthracis Ames and comparison to closely related bacteria.</title>
        <authorList>
            <person name="Read T.D."/>
            <person name="Peterson S.N."/>
            <person name="Tourasse N.J."/>
            <person name="Baillie L.W."/>
            <person name="Paulsen I.T."/>
            <person name="Nelson K.E."/>
            <person name="Tettelin H."/>
            <person name="Fouts D.E."/>
            <person name="Eisen J.A."/>
            <person name="Gill S.R."/>
            <person name="Holtzapple E.K."/>
            <person name="Okstad O.A."/>
            <person name="Helgason E."/>
            <person name="Rilstone J."/>
            <person name="Wu M."/>
            <person name="Kolonay J.F."/>
            <person name="Beanan M.J."/>
            <person name="Dodson R.J."/>
            <person name="Brinkac L.M."/>
            <person name="Gwinn M.L."/>
            <person name="DeBoy R.T."/>
            <person name="Madpu R."/>
            <person name="Daugherty S.C."/>
            <person name="Durkin A.S."/>
            <person name="Haft D.H."/>
            <person name="Nelson W.C."/>
            <person name="Peterson J.D."/>
            <person name="Pop M."/>
            <person name="Khouri H.M."/>
            <person name="Radune D."/>
            <person name="Benton J.L."/>
            <person name="Mahamoud Y."/>
            <person name="Jiang L."/>
            <person name="Hance I.R."/>
            <person name="Weidman J.F."/>
            <person name="Berry K.J."/>
            <person name="Plaut R.D."/>
            <person name="Wolf A.M."/>
            <person name="Watkins K.L."/>
            <person name="Nierman W.C."/>
            <person name="Hazen A."/>
            <person name="Cline R.T."/>
            <person name="Redmond C."/>
            <person name="Thwaite J.E."/>
            <person name="White O."/>
            <person name="Salzberg S.L."/>
            <person name="Thomason B."/>
            <person name="Friedlander A.M."/>
            <person name="Koehler T.M."/>
            <person name="Hanna P.C."/>
            <person name="Kolstoe A.-B."/>
            <person name="Fraser C.M."/>
        </authorList>
    </citation>
    <scope>NUCLEOTIDE SEQUENCE [LARGE SCALE GENOMIC DNA]</scope>
    <source>
        <strain>Ames / isolate Porton</strain>
    </source>
</reference>
<reference key="2">
    <citation type="journal article" date="2009" name="J. Bacteriol.">
        <title>The complete genome sequence of Bacillus anthracis Ames 'Ancestor'.</title>
        <authorList>
            <person name="Ravel J."/>
            <person name="Jiang L."/>
            <person name="Stanley S.T."/>
            <person name="Wilson M.R."/>
            <person name="Decker R.S."/>
            <person name="Read T.D."/>
            <person name="Worsham P."/>
            <person name="Keim P.S."/>
            <person name="Salzberg S.L."/>
            <person name="Fraser-Liggett C.M."/>
            <person name="Rasko D.A."/>
        </authorList>
    </citation>
    <scope>NUCLEOTIDE SEQUENCE [LARGE SCALE GENOMIC DNA]</scope>
    <source>
        <strain>Ames ancestor</strain>
    </source>
</reference>
<reference key="3">
    <citation type="submission" date="2004-01" db="EMBL/GenBank/DDBJ databases">
        <title>Complete genome sequence of Bacillus anthracis Sterne.</title>
        <authorList>
            <person name="Brettin T.S."/>
            <person name="Bruce D."/>
            <person name="Challacombe J.F."/>
            <person name="Gilna P."/>
            <person name="Han C."/>
            <person name="Hill K."/>
            <person name="Hitchcock P."/>
            <person name="Jackson P."/>
            <person name="Keim P."/>
            <person name="Longmire J."/>
            <person name="Lucas S."/>
            <person name="Okinaka R."/>
            <person name="Richardson P."/>
            <person name="Rubin E."/>
            <person name="Tice H."/>
        </authorList>
    </citation>
    <scope>NUCLEOTIDE SEQUENCE [LARGE SCALE GENOMIC DNA]</scope>
    <source>
        <strain>Sterne</strain>
    </source>
</reference>
<keyword id="KW-0028">Amino-acid biosynthesis</keyword>
<keyword id="KW-0055">Arginine biosynthesis</keyword>
<keyword id="KW-0067">ATP-binding</keyword>
<keyword id="KW-0963">Cytoplasm</keyword>
<keyword id="KW-0436">Ligase</keyword>
<keyword id="KW-0547">Nucleotide-binding</keyword>
<keyword id="KW-1185">Reference proteome</keyword>
<name>ASSY_BACAN</name>
<evidence type="ECO:0000255" key="1">
    <source>
        <dbReference type="HAMAP-Rule" id="MF_00005"/>
    </source>
</evidence>
<gene>
    <name evidence="1" type="primary">argG</name>
    <name type="ordered locus">BA_4880</name>
    <name type="ordered locus">GBAA_4880</name>
    <name type="ordered locus">BAS4528</name>
</gene>
<organism>
    <name type="scientific">Bacillus anthracis</name>
    <dbReference type="NCBI Taxonomy" id="1392"/>
    <lineage>
        <taxon>Bacteria</taxon>
        <taxon>Bacillati</taxon>
        <taxon>Bacillota</taxon>
        <taxon>Bacilli</taxon>
        <taxon>Bacillales</taxon>
        <taxon>Bacillaceae</taxon>
        <taxon>Bacillus</taxon>
        <taxon>Bacillus cereus group</taxon>
    </lineage>
</organism>
<feature type="chain" id="PRO_0000148564" description="Argininosuccinate synthase">
    <location>
        <begin position="1"/>
        <end position="401"/>
    </location>
</feature>
<feature type="binding site" evidence="1">
    <location>
        <begin position="9"/>
        <end position="17"/>
    </location>
    <ligand>
        <name>ATP</name>
        <dbReference type="ChEBI" id="CHEBI:30616"/>
    </ligand>
</feature>
<feature type="binding site" evidence="1">
    <location>
        <position position="86"/>
    </location>
    <ligand>
        <name>L-citrulline</name>
        <dbReference type="ChEBI" id="CHEBI:57743"/>
    </ligand>
</feature>
<feature type="binding site" evidence="1">
    <location>
        <position position="116"/>
    </location>
    <ligand>
        <name>ATP</name>
        <dbReference type="ChEBI" id="CHEBI:30616"/>
    </ligand>
</feature>
<feature type="binding site" evidence="1">
    <location>
        <position position="118"/>
    </location>
    <ligand>
        <name>L-aspartate</name>
        <dbReference type="ChEBI" id="CHEBI:29991"/>
    </ligand>
</feature>
<feature type="binding site" evidence="1">
    <location>
        <position position="122"/>
    </location>
    <ligand>
        <name>L-aspartate</name>
        <dbReference type="ChEBI" id="CHEBI:29991"/>
    </ligand>
</feature>
<feature type="binding site" evidence="1">
    <location>
        <position position="122"/>
    </location>
    <ligand>
        <name>L-citrulline</name>
        <dbReference type="ChEBI" id="CHEBI:57743"/>
    </ligand>
</feature>
<feature type="binding site" evidence="1">
    <location>
        <position position="123"/>
    </location>
    <ligand>
        <name>L-aspartate</name>
        <dbReference type="ChEBI" id="CHEBI:29991"/>
    </ligand>
</feature>
<feature type="binding site" evidence="1">
    <location>
        <position position="126"/>
    </location>
    <ligand>
        <name>L-citrulline</name>
        <dbReference type="ChEBI" id="CHEBI:57743"/>
    </ligand>
</feature>
<feature type="binding site" evidence="1">
    <location>
        <position position="174"/>
    </location>
    <ligand>
        <name>L-citrulline</name>
        <dbReference type="ChEBI" id="CHEBI:57743"/>
    </ligand>
</feature>
<feature type="binding site" evidence="1">
    <location>
        <position position="183"/>
    </location>
    <ligand>
        <name>L-citrulline</name>
        <dbReference type="ChEBI" id="CHEBI:57743"/>
    </ligand>
</feature>
<feature type="binding site" evidence="1">
    <location>
        <position position="259"/>
    </location>
    <ligand>
        <name>L-citrulline</name>
        <dbReference type="ChEBI" id="CHEBI:57743"/>
    </ligand>
</feature>
<feature type="binding site" evidence="1">
    <location>
        <position position="271"/>
    </location>
    <ligand>
        <name>L-citrulline</name>
        <dbReference type="ChEBI" id="CHEBI:57743"/>
    </ligand>
</feature>